<protein>
    <recommendedName>
        <fullName evidence="1">2-C-methyl-D-erythritol 2,4-cyclodiphosphate synthase</fullName>
        <shortName evidence="1">MECDP-synthase</shortName>
        <shortName evidence="1">MECPP-synthase</shortName>
        <shortName evidence="1">MECPS</shortName>
        <ecNumber evidence="1">4.6.1.12</ecNumber>
    </recommendedName>
</protein>
<sequence length="165" mass="17833">MESDPMFIGFGYDRHPLVEGRRLVLAGVEIDAPLGSLGHSDGDVLSHAIIDALLGAGCLGDIGTWFPETKEYKDANSLDLLKETVKILEERGFSVVNVDATVVASIVKLSPYREKIVENLKSALETSRVNVKFKSGNTLGFEGEERGISAYAVCLVEEKGCTKST</sequence>
<dbReference type="EC" id="4.6.1.12" evidence="1"/>
<dbReference type="EMBL" id="AE000512">
    <property type="protein sequence ID" value="AAD35731.1"/>
    <property type="molecule type" value="Genomic_DNA"/>
</dbReference>
<dbReference type="PIR" id="F72351">
    <property type="entry name" value="F72351"/>
</dbReference>
<dbReference type="RefSeq" id="NP_228456.1">
    <property type="nucleotide sequence ID" value="NC_000853.1"/>
</dbReference>
<dbReference type="SMR" id="Q9WZB5"/>
<dbReference type="FunCoup" id="Q9WZB5">
    <property type="interactions" value="323"/>
</dbReference>
<dbReference type="STRING" id="243274.TM_0647"/>
<dbReference type="PaxDb" id="243274-THEMA_01430"/>
<dbReference type="DNASU" id="897752"/>
<dbReference type="EnsemblBacteria" id="AAD35731">
    <property type="protein sequence ID" value="AAD35731"/>
    <property type="gene ID" value="TM_0647"/>
</dbReference>
<dbReference type="KEGG" id="tma:TM0647"/>
<dbReference type="PATRIC" id="fig|243274.5.peg.657"/>
<dbReference type="eggNOG" id="COG0245">
    <property type="taxonomic scope" value="Bacteria"/>
</dbReference>
<dbReference type="InParanoid" id="Q9WZB5"/>
<dbReference type="OrthoDB" id="9804336at2"/>
<dbReference type="UniPathway" id="UPA00056">
    <property type="reaction ID" value="UER00095"/>
</dbReference>
<dbReference type="Proteomes" id="UP000008183">
    <property type="component" value="Chromosome"/>
</dbReference>
<dbReference type="GO" id="GO:0008685">
    <property type="term" value="F:2-C-methyl-D-erythritol 2,4-cyclodiphosphate synthase activity"/>
    <property type="evidence" value="ECO:0000318"/>
    <property type="project" value="GO_Central"/>
</dbReference>
<dbReference type="GO" id="GO:0046872">
    <property type="term" value="F:metal ion binding"/>
    <property type="evidence" value="ECO:0007669"/>
    <property type="project" value="UniProtKB-KW"/>
</dbReference>
<dbReference type="GO" id="GO:0019288">
    <property type="term" value="P:isopentenyl diphosphate biosynthetic process, methylerythritol 4-phosphate pathway"/>
    <property type="evidence" value="ECO:0007669"/>
    <property type="project" value="UniProtKB-UniRule"/>
</dbReference>
<dbReference type="GO" id="GO:0016114">
    <property type="term" value="P:terpenoid biosynthetic process"/>
    <property type="evidence" value="ECO:0007669"/>
    <property type="project" value="InterPro"/>
</dbReference>
<dbReference type="CDD" id="cd00554">
    <property type="entry name" value="MECDP_synthase"/>
    <property type="match status" value="1"/>
</dbReference>
<dbReference type="FunFam" id="3.30.1330.50:FF:000003">
    <property type="entry name" value="2-C-methyl-D-erythritol 2,4-cyclodiphosphate synthase"/>
    <property type="match status" value="1"/>
</dbReference>
<dbReference type="Gene3D" id="3.30.1330.50">
    <property type="entry name" value="2-C-methyl-D-erythritol 2,4-cyclodiphosphate synthase"/>
    <property type="match status" value="1"/>
</dbReference>
<dbReference type="HAMAP" id="MF_00107">
    <property type="entry name" value="IspF"/>
    <property type="match status" value="1"/>
</dbReference>
<dbReference type="InterPro" id="IPR003526">
    <property type="entry name" value="MECDP_synthase"/>
</dbReference>
<dbReference type="InterPro" id="IPR020555">
    <property type="entry name" value="MECDP_synthase_CS"/>
</dbReference>
<dbReference type="InterPro" id="IPR036571">
    <property type="entry name" value="MECDP_synthase_sf"/>
</dbReference>
<dbReference type="NCBIfam" id="TIGR00151">
    <property type="entry name" value="ispF"/>
    <property type="match status" value="1"/>
</dbReference>
<dbReference type="PANTHER" id="PTHR43181">
    <property type="entry name" value="2-C-METHYL-D-ERYTHRITOL 2,4-CYCLODIPHOSPHATE SYNTHASE, CHLOROPLASTIC"/>
    <property type="match status" value="1"/>
</dbReference>
<dbReference type="PANTHER" id="PTHR43181:SF1">
    <property type="entry name" value="2-C-METHYL-D-ERYTHRITOL 2,4-CYCLODIPHOSPHATE SYNTHASE, CHLOROPLASTIC"/>
    <property type="match status" value="1"/>
</dbReference>
<dbReference type="Pfam" id="PF02542">
    <property type="entry name" value="YgbB"/>
    <property type="match status" value="1"/>
</dbReference>
<dbReference type="SUPFAM" id="SSF69765">
    <property type="entry name" value="IpsF-like"/>
    <property type="match status" value="1"/>
</dbReference>
<dbReference type="PROSITE" id="PS01350">
    <property type="entry name" value="ISPF"/>
    <property type="match status" value="1"/>
</dbReference>
<evidence type="ECO:0000255" key="1">
    <source>
        <dbReference type="HAMAP-Rule" id="MF_00107"/>
    </source>
</evidence>
<accession>Q9WZB5</accession>
<reference key="1">
    <citation type="journal article" date="1999" name="Nature">
        <title>Evidence for lateral gene transfer between Archaea and Bacteria from genome sequence of Thermotoga maritima.</title>
        <authorList>
            <person name="Nelson K.E."/>
            <person name="Clayton R.A."/>
            <person name="Gill S.R."/>
            <person name="Gwinn M.L."/>
            <person name="Dodson R.J."/>
            <person name="Haft D.H."/>
            <person name="Hickey E.K."/>
            <person name="Peterson J.D."/>
            <person name="Nelson W.C."/>
            <person name="Ketchum K.A."/>
            <person name="McDonald L.A."/>
            <person name="Utterback T.R."/>
            <person name="Malek J.A."/>
            <person name="Linher K.D."/>
            <person name="Garrett M.M."/>
            <person name="Stewart A.M."/>
            <person name="Cotton M.D."/>
            <person name="Pratt M.S."/>
            <person name="Phillips C.A."/>
            <person name="Richardson D.L."/>
            <person name="Heidelberg J.F."/>
            <person name="Sutton G.G."/>
            <person name="Fleischmann R.D."/>
            <person name="Eisen J.A."/>
            <person name="White O."/>
            <person name="Salzberg S.L."/>
            <person name="Smith H.O."/>
            <person name="Venter J.C."/>
            <person name="Fraser C.M."/>
        </authorList>
    </citation>
    <scope>NUCLEOTIDE SEQUENCE [LARGE SCALE GENOMIC DNA]</scope>
    <source>
        <strain>ATCC 43589 / DSM 3109 / JCM 10099 / NBRC 100826 / MSB8</strain>
    </source>
</reference>
<keyword id="KW-0414">Isoprene biosynthesis</keyword>
<keyword id="KW-0456">Lyase</keyword>
<keyword id="KW-0479">Metal-binding</keyword>
<keyword id="KW-1185">Reference proteome</keyword>
<feature type="chain" id="PRO_0000189509" description="2-C-methyl-D-erythritol 2,4-cyclodiphosphate synthase">
    <location>
        <begin position="1"/>
        <end position="165"/>
    </location>
</feature>
<feature type="binding site" evidence="1">
    <location>
        <begin position="13"/>
        <end position="15"/>
    </location>
    <ligand>
        <name>4-CDP-2-C-methyl-D-erythritol 2-phosphate</name>
        <dbReference type="ChEBI" id="CHEBI:57919"/>
    </ligand>
</feature>
<feature type="binding site" evidence="1">
    <location>
        <position position="13"/>
    </location>
    <ligand>
        <name>a divalent metal cation</name>
        <dbReference type="ChEBI" id="CHEBI:60240"/>
    </ligand>
</feature>
<feature type="binding site" evidence="1">
    <location>
        <position position="15"/>
    </location>
    <ligand>
        <name>a divalent metal cation</name>
        <dbReference type="ChEBI" id="CHEBI:60240"/>
    </ligand>
</feature>
<feature type="binding site" evidence="1">
    <location>
        <begin position="39"/>
        <end position="40"/>
    </location>
    <ligand>
        <name>4-CDP-2-C-methyl-D-erythritol 2-phosphate</name>
        <dbReference type="ChEBI" id="CHEBI:57919"/>
    </ligand>
</feature>
<feature type="binding site" evidence="1">
    <location>
        <position position="47"/>
    </location>
    <ligand>
        <name>a divalent metal cation</name>
        <dbReference type="ChEBI" id="CHEBI:60240"/>
    </ligand>
</feature>
<feature type="binding site" evidence="1">
    <location>
        <begin position="61"/>
        <end position="63"/>
    </location>
    <ligand>
        <name>4-CDP-2-C-methyl-D-erythritol 2-phosphate</name>
        <dbReference type="ChEBI" id="CHEBI:57919"/>
    </ligand>
</feature>
<feature type="binding site" evidence="1">
    <location>
        <position position="141"/>
    </location>
    <ligand>
        <name>4-CDP-2-C-methyl-D-erythritol 2-phosphate</name>
        <dbReference type="ChEBI" id="CHEBI:57919"/>
    </ligand>
</feature>
<feature type="site" description="Transition state stabilizer" evidence="1">
    <location>
        <position position="39"/>
    </location>
</feature>
<feature type="site" description="Transition state stabilizer" evidence="1">
    <location>
        <position position="135"/>
    </location>
</feature>
<comment type="function">
    <text evidence="1">Involved in the biosynthesis of isopentenyl diphosphate (IPP) and dimethylallyl diphosphate (DMAPP), two major building blocks of isoprenoid compounds. Catalyzes the conversion of 4-diphosphocytidyl-2-C-methyl-D-erythritol 2-phosphate (CDP-ME2P) to 2-C-methyl-D-erythritol 2,4-cyclodiphosphate (ME-CPP) with a corresponding release of cytidine 5-monophosphate (CMP).</text>
</comment>
<comment type="catalytic activity">
    <reaction evidence="1">
        <text>4-CDP-2-C-methyl-D-erythritol 2-phosphate = 2-C-methyl-D-erythritol 2,4-cyclic diphosphate + CMP</text>
        <dbReference type="Rhea" id="RHEA:23864"/>
        <dbReference type="ChEBI" id="CHEBI:57919"/>
        <dbReference type="ChEBI" id="CHEBI:58483"/>
        <dbReference type="ChEBI" id="CHEBI:60377"/>
        <dbReference type="EC" id="4.6.1.12"/>
    </reaction>
</comment>
<comment type="cofactor">
    <cofactor evidence="1">
        <name>a divalent metal cation</name>
        <dbReference type="ChEBI" id="CHEBI:60240"/>
    </cofactor>
    <text evidence="1">Binds 1 divalent metal cation per subunit.</text>
</comment>
<comment type="pathway">
    <text evidence="1">Isoprenoid biosynthesis; isopentenyl diphosphate biosynthesis via DXP pathway; isopentenyl diphosphate from 1-deoxy-D-xylulose 5-phosphate: step 4/6.</text>
</comment>
<comment type="subunit">
    <text evidence="1">Homotrimer.</text>
</comment>
<comment type="similarity">
    <text evidence="1">Belongs to the IspF family.</text>
</comment>
<proteinExistence type="inferred from homology"/>
<name>ISPF_THEMA</name>
<organism>
    <name type="scientific">Thermotoga maritima (strain ATCC 43589 / DSM 3109 / JCM 10099 / NBRC 100826 / MSB8)</name>
    <dbReference type="NCBI Taxonomy" id="243274"/>
    <lineage>
        <taxon>Bacteria</taxon>
        <taxon>Thermotogati</taxon>
        <taxon>Thermotogota</taxon>
        <taxon>Thermotogae</taxon>
        <taxon>Thermotogales</taxon>
        <taxon>Thermotogaceae</taxon>
        <taxon>Thermotoga</taxon>
    </lineage>
</organism>
<gene>
    <name evidence="1" type="primary">ispF</name>
    <name type="ordered locus">TM_0647</name>
</gene>